<feature type="chain" id="PRO_0000063094" description="Putative pterin-4-alpha-carbinolamine dehydratase">
    <location>
        <begin position="1"/>
        <end position="100"/>
    </location>
</feature>
<gene>
    <name type="ordered locus">RPA0404</name>
</gene>
<comment type="catalytic activity">
    <reaction evidence="1">
        <text>(4aS,6R)-4a-hydroxy-L-erythro-5,6,7,8-tetrahydrobiopterin = (6R)-L-erythro-6,7-dihydrobiopterin + H2O</text>
        <dbReference type="Rhea" id="RHEA:11920"/>
        <dbReference type="ChEBI" id="CHEBI:15377"/>
        <dbReference type="ChEBI" id="CHEBI:15642"/>
        <dbReference type="ChEBI" id="CHEBI:43120"/>
        <dbReference type="EC" id="4.2.1.96"/>
    </reaction>
</comment>
<comment type="similarity">
    <text evidence="1">Belongs to the pterin-4-alpha-carbinolamine dehydratase family.</text>
</comment>
<evidence type="ECO:0000255" key="1">
    <source>
        <dbReference type="HAMAP-Rule" id="MF_00434"/>
    </source>
</evidence>
<name>PHS_RHOPA</name>
<keyword id="KW-0456">Lyase</keyword>
<dbReference type="EC" id="4.2.1.96" evidence="1"/>
<dbReference type="EMBL" id="BX572594">
    <property type="protein sequence ID" value="CAE25848.1"/>
    <property type="molecule type" value="Genomic_DNA"/>
</dbReference>
<dbReference type="RefSeq" id="WP_011155972.1">
    <property type="nucleotide sequence ID" value="NZ_CP116810.1"/>
</dbReference>
<dbReference type="SMR" id="P61734"/>
<dbReference type="STRING" id="258594.RPA0404"/>
<dbReference type="GeneID" id="66891418"/>
<dbReference type="eggNOG" id="COG2154">
    <property type="taxonomic scope" value="Bacteria"/>
</dbReference>
<dbReference type="HOGENOM" id="CLU_081974_3_2_5"/>
<dbReference type="PhylomeDB" id="P61734"/>
<dbReference type="GO" id="GO:0008124">
    <property type="term" value="F:4-alpha-hydroxytetrahydrobiopterin dehydratase activity"/>
    <property type="evidence" value="ECO:0007669"/>
    <property type="project" value="UniProtKB-UniRule"/>
</dbReference>
<dbReference type="GO" id="GO:0006729">
    <property type="term" value="P:tetrahydrobiopterin biosynthetic process"/>
    <property type="evidence" value="ECO:0007669"/>
    <property type="project" value="InterPro"/>
</dbReference>
<dbReference type="CDD" id="cd00914">
    <property type="entry name" value="PCD_DCoH_subfamily_b"/>
    <property type="match status" value="1"/>
</dbReference>
<dbReference type="Gene3D" id="3.30.1360.20">
    <property type="entry name" value="Transcriptional coactivator/pterin dehydratase"/>
    <property type="match status" value="1"/>
</dbReference>
<dbReference type="HAMAP" id="MF_00434">
    <property type="entry name" value="Pterin_4_alpha"/>
    <property type="match status" value="1"/>
</dbReference>
<dbReference type="InterPro" id="IPR036428">
    <property type="entry name" value="PCD_sf"/>
</dbReference>
<dbReference type="InterPro" id="IPR001533">
    <property type="entry name" value="Pterin_deHydtase"/>
</dbReference>
<dbReference type="NCBIfam" id="NF002017">
    <property type="entry name" value="PRK00823.1-2"/>
    <property type="match status" value="1"/>
</dbReference>
<dbReference type="NCBIfam" id="NF002018">
    <property type="entry name" value="PRK00823.1-3"/>
    <property type="match status" value="1"/>
</dbReference>
<dbReference type="NCBIfam" id="NF002020">
    <property type="entry name" value="PRK00823.1-5"/>
    <property type="match status" value="1"/>
</dbReference>
<dbReference type="PANTHER" id="PTHR12599">
    <property type="entry name" value="PTERIN-4-ALPHA-CARBINOLAMINE DEHYDRATASE"/>
    <property type="match status" value="1"/>
</dbReference>
<dbReference type="PANTHER" id="PTHR12599:SF0">
    <property type="entry name" value="PTERIN-4-ALPHA-CARBINOLAMINE DEHYDRATASE"/>
    <property type="match status" value="1"/>
</dbReference>
<dbReference type="Pfam" id="PF01329">
    <property type="entry name" value="Pterin_4a"/>
    <property type="match status" value="1"/>
</dbReference>
<dbReference type="SUPFAM" id="SSF55248">
    <property type="entry name" value="PCD-like"/>
    <property type="match status" value="1"/>
</dbReference>
<protein>
    <recommendedName>
        <fullName evidence="1">Putative pterin-4-alpha-carbinolamine dehydratase</fullName>
        <shortName evidence="1">PHS</shortName>
        <ecNumber evidence="1">4.2.1.96</ecNumber>
    </recommendedName>
    <alternativeName>
        <fullName evidence="1">4-alpha-hydroxy-tetrahydropterin dehydratase</fullName>
    </alternativeName>
    <alternativeName>
        <fullName evidence="1">Pterin carbinolamine dehydratase</fullName>
        <shortName evidence="1">PCD</shortName>
    </alternativeName>
</protein>
<proteinExistence type="inferred from homology"/>
<organism>
    <name type="scientific">Rhodopseudomonas palustris (strain ATCC BAA-98 / CGA009)</name>
    <dbReference type="NCBI Taxonomy" id="258594"/>
    <lineage>
        <taxon>Bacteria</taxon>
        <taxon>Pseudomonadati</taxon>
        <taxon>Pseudomonadota</taxon>
        <taxon>Alphaproteobacteria</taxon>
        <taxon>Hyphomicrobiales</taxon>
        <taxon>Nitrobacteraceae</taxon>
        <taxon>Rhodopseudomonas</taxon>
    </lineage>
</organism>
<sequence length="100" mass="11322">MNRLSASERQAALRELPGWLELEEREAIGRSYQFKDFSEAFGFMTRVALAAEKADHHPEWRNVYRTVDVVLTTHDAGGVTERDVKLAKAMDAIAERCGAR</sequence>
<reference key="1">
    <citation type="journal article" date="2004" name="Nat. Biotechnol.">
        <title>Complete genome sequence of the metabolically versatile photosynthetic bacterium Rhodopseudomonas palustris.</title>
        <authorList>
            <person name="Larimer F.W."/>
            <person name="Chain P."/>
            <person name="Hauser L."/>
            <person name="Lamerdin J.E."/>
            <person name="Malfatti S."/>
            <person name="Do L."/>
            <person name="Land M.L."/>
            <person name="Pelletier D.A."/>
            <person name="Beatty J.T."/>
            <person name="Lang A.S."/>
            <person name="Tabita F.R."/>
            <person name="Gibson J.L."/>
            <person name="Hanson T.E."/>
            <person name="Bobst C."/>
            <person name="Torres y Torres J.L."/>
            <person name="Peres C."/>
            <person name="Harrison F.H."/>
            <person name="Gibson J."/>
            <person name="Harwood C.S."/>
        </authorList>
    </citation>
    <scope>NUCLEOTIDE SEQUENCE [LARGE SCALE GENOMIC DNA]</scope>
    <source>
        <strain>ATCC BAA-98 / CGA009</strain>
    </source>
</reference>
<accession>P61734</accession>